<protein>
    <recommendedName>
        <fullName evidence="1">Homoserine kinase</fullName>
        <shortName evidence="1">HK</shortName>
        <shortName evidence="1">HSK</shortName>
        <ecNumber evidence="1">2.7.1.39</ecNumber>
    </recommendedName>
</protein>
<gene>
    <name evidence="1" type="primary">thrB</name>
    <name type="ordered locus">SCO5356</name>
    <name type="ORF">SCBAC5H2.25</name>
</gene>
<proteinExistence type="inferred from homology"/>
<feature type="chain" id="PRO_0000156617" description="Homoserine kinase">
    <location>
        <begin position="1"/>
        <end position="309"/>
    </location>
</feature>
<feature type="binding site" evidence="1">
    <location>
        <begin position="95"/>
        <end position="105"/>
    </location>
    <ligand>
        <name>ATP</name>
        <dbReference type="ChEBI" id="CHEBI:30616"/>
    </ligand>
</feature>
<evidence type="ECO:0000255" key="1">
    <source>
        <dbReference type="HAMAP-Rule" id="MF_00384"/>
    </source>
</evidence>
<sequence length="309" mass="31820">MAGPAFRAAAVRVRVPATSANLGPGFDALGLALGLYDDVVVRVADSGLHIDIAGEGSETLPRDEKHLLVRSLRTAFDLLGGQPRGLEIVCANRIPHGRGLGSSSAAICAGIVAARAVTIGGEARLDDAALLDLATEIEGHPDNVAACLLGGFTLSWMESGAARAIRMEPSDSIVPVVFVPGKPVLTQTARGLLPRSVPHVDAAANAGRAALLVEALTRRPELLLPATEDRLHQEYRAPAMPESTALVERLRGDGIPAVISGAGPTVMALADADTADKVEALAGTDWAANRLGLDQQGATVLPLATASDT</sequence>
<name>KHSE_STRCO</name>
<organism>
    <name type="scientific">Streptomyces coelicolor (strain ATCC BAA-471 / A3(2) / M145)</name>
    <dbReference type="NCBI Taxonomy" id="100226"/>
    <lineage>
        <taxon>Bacteria</taxon>
        <taxon>Bacillati</taxon>
        <taxon>Actinomycetota</taxon>
        <taxon>Actinomycetes</taxon>
        <taxon>Kitasatosporales</taxon>
        <taxon>Streptomycetaceae</taxon>
        <taxon>Streptomyces</taxon>
        <taxon>Streptomyces albidoflavus group</taxon>
    </lineage>
</organism>
<accession>Q9ADB2</accession>
<keyword id="KW-0028">Amino-acid biosynthesis</keyword>
<keyword id="KW-0067">ATP-binding</keyword>
<keyword id="KW-0963">Cytoplasm</keyword>
<keyword id="KW-0418">Kinase</keyword>
<keyword id="KW-0547">Nucleotide-binding</keyword>
<keyword id="KW-1185">Reference proteome</keyword>
<keyword id="KW-0791">Threonine biosynthesis</keyword>
<keyword id="KW-0808">Transferase</keyword>
<reference key="1">
    <citation type="journal article" date="2002" name="Nature">
        <title>Complete genome sequence of the model actinomycete Streptomyces coelicolor A3(2).</title>
        <authorList>
            <person name="Bentley S.D."/>
            <person name="Chater K.F."/>
            <person name="Cerdeno-Tarraga A.-M."/>
            <person name="Challis G.L."/>
            <person name="Thomson N.R."/>
            <person name="James K.D."/>
            <person name="Harris D.E."/>
            <person name="Quail M.A."/>
            <person name="Kieser H."/>
            <person name="Harper D."/>
            <person name="Bateman A."/>
            <person name="Brown S."/>
            <person name="Chandra G."/>
            <person name="Chen C.W."/>
            <person name="Collins M."/>
            <person name="Cronin A."/>
            <person name="Fraser A."/>
            <person name="Goble A."/>
            <person name="Hidalgo J."/>
            <person name="Hornsby T."/>
            <person name="Howarth S."/>
            <person name="Huang C.-H."/>
            <person name="Kieser T."/>
            <person name="Larke L."/>
            <person name="Murphy L.D."/>
            <person name="Oliver K."/>
            <person name="O'Neil S."/>
            <person name="Rabbinowitsch E."/>
            <person name="Rajandream M.A."/>
            <person name="Rutherford K.M."/>
            <person name="Rutter S."/>
            <person name="Seeger K."/>
            <person name="Saunders D."/>
            <person name="Sharp S."/>
            <person name="Squares R."/>
            <person name="Squares S."/>
            <person name="Taylor K."/>
            <person name="Warren T."/>
            <person name="Wietzorrek A."/>
            <person name="Woodward J.R."/>
            <person name="Barrell B.G."/>
            <person name="Parkhill J."/>
            <person name="Hopwood D.A."/>
        </authorList>
    </citation>
    <scope>NUCLEOTIDE SEQUENCE [LARGE SCALE GENOMIC DNA]</scope>
    <source>
        <strain>ATCC BAA-471 / A3(2) / M145</strain>
    </source>
</reference>
<dbReference type="EC" id="2.7.1.39" evidence="1"/>
<dbReference type="EMBL" id="AL939123">
    <property type="protein sequence ID" value="CAC33920.1"/>
    <property type="molecule type" value="Genomic_DNA"/>
</dbReference>
<dbReference type="RefSeq" id="NP_629496.1">
    <property type="nucleotide sequence ID" value="NC_003888.3"/>
</dbReference>
<dbReference type="RefSeq" id="WP_011030204.1">
    <property type="nucleotide sequence ID" value="NZ_VNID01000011.1"/>
</dbReference>
<dbReference type="SMR" id="Q9ADB2"/>
<dbReference type="FunCoup" id="Q9ADB2">
    <property type="interactions" value="299"/>
</dbReference>
<dbReference type="STRING" id="100226.gene:17763008"/>
<dbReference type="PaxDb" id="100226-SCO5356"/>
<dbReference type="GeneID" id="96655360"/>
<dbReference type="KEGG" id="sco:SCO5356"/>
<dbReference type="PATRIC" id="fig|100226.15.peg.5436"/>
<dbReference type="eggNOG" id="COG0083">
    <property type="taxonomic scope" value="Bacteria"/>
</dbReference>
<dbReference type="HOGENOM" id="CLU_041243_0_1_11"/>
<dbReference type="InParanoid" id="Q9ADB2"/>
<dbReference type="OrthoDB" id="9769912at2"/>
<dbReference type="PhylomeDB" id="Q9ADB2"/>
<dbReference type="UniPathway" id="UPA00050">
    <property type="reaction ID" value="UER00064"/>
</dbReference>
<dbReference type="Proteomes" id="UP000001973">
    <property type="component" value="Chromosome"/>
</dbReference>
<dbReference type="GO" id="GO:0005737">
    <property type="term" value="C:cytoplasm"/>
    <property type="evidence" value="ECO:0007669"/>
    <property type="project" value="UniProtKB-SubCell"/>
</dbReference>
<dbReference type="GO" id="GO:0005524">
    <property type="term" value="F:ATP binding"/>
    <property type="evidence" value="ECO:0007669"/>
    <property type="project" value="UniProtKB-UniRule"/>
</dbReference>
<dbReference type="GO" id="GO:0004413">
    <property type="term" value="F:homoserine kinase activity"/>
    <property type="evidence" value="ECO:0007669"/>
    <property type="project" value="UniProtKB-UniRule"/>
</dbReference>
<dbReference type="GO" id="GO:0009088">
    <property type="term" value="P:threonine biosynthetic process"/>
    <property type="evidence" value="ECO:0007669"/>
    <property type="project" value="UniProtKB-UniRule"/>
</dbReference>
<dbReference type="Gene3D" id="3.30.230.10">
    <property type="match status" value="1"/>
</dbReference>
<dbReference type="Gene3D" id="3.30.70.890">
    <property type="entry name" value="GHMP kinase, C-terminal domain"/>
    <property type="match status" value="1"/>
</dbReference>
<dbReference type="HAMAP" id="MF_00384">
    <property type="entry name" value="Homoser_kinase"/>
    <property type="match status" value="1"/>
</dbReference>
<dbReference type="InterPro" id="IPR013750">
    <property type="entry name" value="GHMP_kinase_C_dom"/>
</dbReference>
<dbReference type="InterPro" id="IPR036554">
    <property type="entry name" value="GHMP_kinase_C_sf"/>
</dbReference>
<dbReference type="InterPro" id="IPR006204">
    <property type="entry name" value="GHMP_kinase_N_dom"/>
</dbReference>
<dbReference type="InterPro" id="IPR006203">
    <property type="entry name" value="GHMP_knse_ATP-bd_CS"/>
</dbReference>
<dbReference type="InterPro" id="IPR000870">
    <property type="entry name" value="Homoserine_kinase"/>
</dbReference>
<dbReference type="InterPro" id="IPR020568">
    <property type="entry name" value="Ribosomal_Su5_D2-typ_SF"/>
</dbReference>
<dbReference type="InterPro" id="IPR014721">
    <property type="entry name" value="Ribsml_uS5_D2-typ_fold_subgr"/>
</dbReference>
<dbReference type="NCBIfam" id="TIGR00191">
    <property type="entry name" value="thrB"/>
    <property type="match status" value="1"/>
</dbReference>
<dbReference type="PANTHER" id="PTHR20861:SF1">
    <property type="entry name" value="HOMOSERINE KINASE"/>
    <property type="match status" value="1"/>
</dbReference>
<dbReference type="PANTHER" id="PTHR20861">
    <property type="entry name" value="HOMOSERINE/4-DIPHOSPHOCYTIDYL-2-C-METHYL-D-ERYTHRITOL KINASE"/>
    <property type="match status" value="1"/>
</dbReference>
<dbReference type="Pfam" id="PF08544">
    <property type="entry name" value="GHMP_kinases_C"/>
    <property type="match status" value="1"/>
</dbReference>
<dbReference type="Pfam" id="PF00288">
    <property type="entry name" value="GHMP_kinases_N"/>
    <property type="match status" value="1"/>
</dbReference>
<dbReference type="PIRSF" id="PIRSF000676">
    <property type="entry name" value="Homoser_kin"/>
    <property type="match status" value="1"/>
</dbReference>
<dbReference type="PRINTS" id="PR00958">
    <property type="entry name" value="HOMSERKINASE"/>
</dbReference>
<dbReference type="SUPFAM" id="SSF55060">
    <property type="entry name" value="GHMP Kinase, C-terminal domain"/>
    <property type="match status" value="1"/>
</dbReference>
<dbReference type="SUPFAM" id="SSF54211">
    <property type="entry name" value="Ribosomal protein S5 domain 2-like"/>
    <property type="match status" value="1"/>
</dbReference>
<dbReference type="PROSITE" id="PS00627">
    <property type="entry name" value="GHMP_KINASES_ATP"/>
    <property type="match status" value="1"/>
</dbReference>
<comment type="function">
    <text evidence="1">Catalyzes the ATP-dependent phosphorylation of L-homoserine to L-homoserine phosphate.</text>
</comment>
<comment type="catalytic activity">
    <reaction evidence="1">
        <text>L-homoserine + ATP = O-phospho-L-homoserine + ADP + H(+)</text>
        <dbReference type="Rhea" id="RHEA:13985"/>
        <dbReference type="ChEBI" id="CHEBI:15378"/>
        <dbReference type="ChEBI" id="CHEBI:30616"/>
        <dbReference type="ChEBI" id="CHEBI:57476"/>
        <dbReference type="ChEBI" id="CHEBI:57590"/>
        <dbReference type="ChEBI" id="CHEBI:456216"/>
        <dbReference type="EC" id="2.7.1.39"/>
    </reaction>
</comment>
<comment type="pathway">
    <text evidence="1">Amino-acid biosynthesis; L-threonine biosynthesis; L-threonine from L-aspartate: step 4/5.</text>
</comment>
<comment type="subcellular location">
    <subcellularLocation>
        <location evidence="1">Cytoplasm</location>
    </subcellularLocation>
</comment>
<comment type="similarity">
    <text evidence="1">Belongs to the GHMP kinase family. Homoserine kinase subfamily.</text>
</comment>